<gene>
    <name evidence="1" type="primary">BNA4</name>
    <name type="ORF">UMAG_06333</name>
</gene>
<reference key="1">
    <citation type="journal article" date="2006" name="Nature">
        <title>Insights from the genome of the biotrophic fungal plant pathogen Ustilago maydis.</title>
        <authorList>
            <person name="Kaemper J."/>
            <person name="Kahmann R."/>
            <person name="Boelker M."/>
            <person name="Ma L.-J."/>
            <person name="Brefort T."/>
            <person name="Saville B.J."/>
            <person name="Banuett F."/>
            <person name="Kronstad J.W."/>
            <person name="Gold S.E."/>
            <person name="Mueller O."/>
            <person name="Perlin M.H."/>
            <person name="Woesten H.A.B."/>
            <person name="de Vries R."/>
            <person name="Ruiz-Herrera J."/>
            <person name="Reynaga-Pena C.G."/>
            <person name="Snetselaar K."/>
            <person name="McCann M."/>
            <person name="Perez-Martin J."/>
            <person name="Feldbruegge M."/>
            <person name="Basse C.W."/>
            <person name="Steinberg G."/>
            <person name="Ibeas J.I."/>
            <person name="Holloman W."/>
            <person name="Guzman P."/>
            <person name="Farman M.L."/>
            <person name="Stajich J.E."/>
            <person name="Sentandreu R."/>
            <person name="Gonzalez-Prieto J.M."/>
            <person name="Kennell J.C."/>
            <person name="Molina L."/>
            <person name="Schirawski J."/>
            <person name="Mendoza-Mendoza A."/>
            <person name="Greilinger D."/>
            <person name="Muench K."/>
            <person name="Roessel N."/>
            <person name="Scherer M."/>
            <person name="Vranes M."/>
            <person name="Ladendorf O."/>
            <person name="Vincon V."/>
            <person name="Fuchs U."/>
            <person name="Sandrock B."/>
            <person name="Meng S."/>
            <person name="Ho E.C.H."/>
            <person name="Cahill M.J."/>
            <person name="Boyce K.J."/>
            <person name="Klose J."/>
            <person name="Klosterman S.J."/>
            <person name="Deelstra H.J."/>
            <person name="Ortiz-Castellanos L."/>
            <person name="Li W."/>
            <person name="Sanchez-Alonso P."/>
            <person name="Schreier P.H."/>
            <person name="Haeuser-Hahn I."/>
            <person name="Vaupel M."/>
            <person name="Koopmann E."/>
            <person name="Friedrich G."/>
            <person name="Voss H."/>
            <person name="Schlueter T."/>
            <person name="Margolis J."/>
            <person name="Platt D."/>
            <person name="Swimmer C."/>
            <person name="Gnirke A."/>
            <person name="Chen F."/>
            <person name="Vysotskaia V."/>
            <person name="Mannhaupt G."/>
            <person name="Gueldener U."/>
            <person name="Muensterkoetter M."/>
            <person name="Haase D."/>
            <person name="Oesterheld M."/>
            <person name="Mewes H.-W."/>
            <person name="Mauceli E.W."/>
            <person name="DeCaprio D."/>
            <person name="Wade C.M."/>
            <person name="Butler J."/>
            <person name="Young S.K."/>
            <person name="Jaffe D.B."/>
            <person name="Calvo S.E."/>
            <person name="Nusbaum C."/>
            <person name="Galagan J.E."/>
            <person name="Birren B.W."/>
        </authorList>
    </citation>
    <scope>NUCLEOTIDE SEQUENCE [LARGE SCALE GENOMIC DNA]</scope>
    <source>
        <strain>DSM 14603 / FGSC 9021 / UM521</strain>
    </source>
</reference>
<reference key="2">
    <citation type="submission" date="2014-09" db="EMBL/GenBank/DDBJ databases">
        <authorList>
            <person name="Gueldener U."/>
            <person name="Muensterkoetter M."/>
            <person name="Walter M.C."/>
            <person name="Mannhaupt G."/>
            <person name="Kahmann R."/>
        </authorList>
    </citation>
    <scope>GENOME REANNOTATION</scope>
    <source>
        <strain>DSM 14603 / FGSC 9021 / UM521</strain>
    </source>
</reference>
<evidence type="ECO:0000255" key="1">
    <source>
        <dbReference type="HAMAP-Rule" id="MF_03018"/>
    </source>
</evidence>
<evidence type="ECO:0000256" key="2">
    <source>
        <dbReference type="SAM" id="MobiDB-lite"/>
    </source>
</evidence>
<evidence type="ECO:0000305" key="3"/>
<accession>Q4P0N0</accession>
<accession>A0A0D1CUY6</accession>
<comment type="function">
    <text evidence="1">Catalyzes the hydroxylation of L-kynurenine (L-Kyn) to form 3-hydroxy-L-kynurenine (L-3OHKyn). Required for synthesis of quinolinic acid.</text>
</comment>
<comment type="catalytic activity">
    <reaction evidence="1">
        <text>L-kynurenine + NADPH + O2 + H(+) = 3-hydroxy-L-kynurenine + NADP(+) + H2O</text>
        <dbReference type="Rhea" id="RHEA:20545"/>
        <dbReference type="ChEBI" id="CHEBI:15377"/>
        <dbReference type="ChEBI" id="CHEBI:15378"/>
        <dbReference type="ChEBI" id="CHEBI:15379"/>
        <dbReference type="ChEBI" id="CHEBI:57783"/>
        <dbReference type="ChEBI" id="CHEBI:57959"/>
        <dbReference type="ChEBI" id="CHEBI:58125"/>
        <dbReference type="ChEBI" id="CHEBI:58349"/>
        <dbReference type="EC" id="1.14.13.9"/>
    </reaction>
</comment>
<comment type="cofactor">
    <cofactor evidence="1">
        <name>FAD</name>
        <dbReference type="ChEBI" id="CHEBI:57692"/>
    </cofactor>
</comment>
<comment type="pathway">
    <text evidence="1">Cofactor biosynthesis; NAD(+) biosynthesis; quinolinate from L-kynurenine: step 1/3.</text>
</comment>
<comment type="subcellular location">
    <subcellularLocation>
        <location evidence="1">Mitochondrion outer membrane</location>
    </subcellularLocation>
</comment>
<comment type="similarity">
    <text evidence="1">Belongs to the aromatic-ring hydroxylase family. KMO subfamily.</text>
</comment>
<comment type="sequence caution" evidence="3">
    <conflict type="erroneous gene model prediction">
        <sequence resource="EMBL-CDS" id="KIS70248"/>
    </conflict>
</comment>
<feature type="chain" id="PRO_0000361933" description="Kynurenine 3-monooxygenase">
    <location>
        <begin position="1"/>
        <end position="600"/>
    </location>
</feature>
<feature type="region of interest" description="Disordered" evidence="2">
    <location>
        <begin position="217"/>
        <end position="242"/>
    </location>
</feature>
<proteinExistence type="inferred from homology"/>
<protein>
    <recommendedName>
        <fullName evidence="1">Kynurenine 3-monooxygenase</fullName>
        <ecNumber evidence="1">1.14.13.9</ecNumber>
    </recommendedName>
    <alternativeName>
        <fullName evidence="1">Biosynthesis of nicotinic acid protein 4</fullName>
    </alternativeName>
    <alternativeName>
        <fullName evidence="1">Kynurenine 3-hydroxylase</fullName>
    </alternativeName>
</protein>
<name>KMO_MYCMD</name>
<organism>
    <name type="scientific">Mycosarcoma maydis</name>
    <name type="common">Corn smut fungus</name>
    <name type="synonym">Ustilago maydis</name>
    <dbReference type="NCBI Taxonomy" id="5270"/>
    <lineage>
        <taxon>Eukaryota</taxon>
        <taxon>Fungi</taxon>
        <taxon>Dikarya</taxon>
        <taxon>Basidiomycota</taxon>
        <taxon>Ustilaginomycotina</taxon>
        <taxon>Ustilaginomycetes</taxon>
        <taxon>Ustilaginales</taxon>
        <taxon>Ustilaginaceae</taxon>
        <taxon>Mycosarcoma</taxon>
    </lineage>
</organism>
<sequence length="600" mass="65460">MSETRKDTDRASAQLPTKCQLPERVAVIGAGPVGCLAALAFAQRGCKVDIFESRPDPRTHEAITRASQRSINLALSTRGITGLRSVSLAGLGVGTNAPNGMDLADLVLQNSVPMRARMIHVVTRQASATQAAEVKEISQLYSTKGESINSVDRGRLNNILLEHALMHRNVEVHFEHKLQSVDFDHDIKSAAKRAGTPPPAIDASANKWLRGANVTGGDSCADEPSGCGGRKQATTKSQGSEYVAPAGTSAVDRVRLDFDVHSTNQHIRKTSNTHYASFVVGCDGAHSSIRSAMGSLIRMHYTHNYIDTGYIELSIPPRTSLGSGSRIRGSGGVDGKRGGHDAFHLDANHLHIWPRHSFMLIALPNLDGSFTCTLFAPFKMFASELSTKEGIVAVFQQHFPDALALIDEEKLVKCLTTRRASALGSVQCDPYHYKDRAVLIGDAAHAMLPFYGQGLNCGFEDVRVMFDIIDQHESLQVALDLYTKERHPDLVAILQLAEQNYREMAHSVVSWPYLLRKKLDGLLMSILPSSMWSSLYAMTTFSNLPYSRVVKTEKRQQAIIGHALVATAVAFVSAAAVGVYSTRALWQPVTVRCIARLHNS</sequence>
<dbReference type="EC" id="1.14.13.9" evidence="1"/>
<dbReference type="EMBL" id="CM003143">
    <property type="protein sequence ID" value="KIS70248.1"/>
    <property type="status" value="ALT_SEQ"/>
    <property type="molecule type" value="Genomic_DNA"/>
</dbReference>
<dbReference type="RefSeq" id="XP_011388318.1">
    <property type="nucleotide sequence ID" value="XM_011390016.1"/>
</dbReference>
<dbReference type="SMR" id="Q4P0N0"/>
<dbReference type="STRING" id="237631.Q4P0N0"/>
<dbReference type="EnsemblFungi" id="KIS70248">
    <property type="protein sequence ID" value="KIS70248"/>
    <property type="gene ID" value="UMAG_06333"/>
</dbReference>
<dbReference type="GeneID" id="23565951"/>
<dbReference type="KEGG" id="uma:UMAG_06333"/>
<dbReference type="eggNOG" id="KOG2614">
    <property type="taxonomic scope" value="Eukaryota"/>
</dbReference>
<dbReference type="InParanoid" id="Q4P0N0"/>
<dbReference type="OrthoDB" id="10053569at2759"/>
<dbReference type="UniPathway" id="UPA00253">
    <property type="reaction ID" value="UER00328"/>
</dbReference>
<dbReference type="Proteomes" id="UP000000561">
    <property type="component" value="Chromosome 4"/>
</dbReference>
<dbReference type="GO" id="GO:0005741">
    <property type="term" value="C:mitochondrial outer membrane"/>
    <property type="evidence" value="ECO:0000318"/>
    <property type="project" value="GO_Central"/>
</dbReference>
<dbReference type="GO" id="GO:0071949">
    <property type="term" value="F:FAD binding"/>
    <property type="evidence" value="ECO:0007669"/>
    <property type="project" value="InterPro"/>
</dbReference>
<dbReference type="GO" id="GO:0004502">
    <property type="term" value="F:kynurenine 3-monooxygenase activity"/>
    <property type="evidence" value="ECO:0000318"/>
    <property type="project" value="GO_Central"/>
</dbReference>
<dbReference type="GO" id="GO:0034354">
    <property type="term" value="P:'de novo' NAD biosynthetic process from L-tryptophan"/>
    <property type="evidence" value="ECO:0007669"/>
    <property type="project" value="UniProtKB-UniRule"/>
</dbReference>
<dbReference type="GO" id="GO:0043420">
    <property type="term" value="P:anthranilate metabolic process"/>
    <property type="evidence" value="ECO:0007669"/>
    <property type="project" value="UniProtKB-UniRule"/>
</dbReference>
<dbReference type="GO" id="GO:0070189">
    <property type="term" value="P:kynurenine metabolic process"/>
    <property type="evidence" value="ECO:0000318"/>
    <property type="project" value="GO_Central"/>
</dbReference>
<dbReference type="GO" id="GO:0006569">
    <property type="term" value="P:L-tryptophan catabolic process"/>
    <property type="evidence" value="ECO:0007669"/>
    <property type="project" value="UniProtKB-UniRule"/>
</dbReference>
<dbReference type="GO" id="GO:0019805">
    <property type="term" value="P:quinolinate biosynthetic process"/>
    <property type="evidence" value="ECO:0007669"/>
    <property type="project" value="UniProtKB-UniRule"/>
</dbReference>
<dbReference type="FunFam" id="3.50.50.60:FF:000795">
    <property type="entry name" value="Kynurenine 3-monooxygenase"/>
    <property type="match status" value="1"/>
</dbReference>
<dbReference type="Gene3D" id="3.50.50.60">
    <property type="entry name" value="FAD/NAD(P)-binding domain"/>
    <property type="match status" value="2"/>
</dbReference>
<dbReference type="HAMAP" id="MF_01971">
    <property type="entry name" value="Kynurenine_monooxygenase"/>
    <property type="match status" value="1"/>
</dbReference>
<dbReference type="InterPro" id="IPR002938">
    <property type="entry name" value="FAD-bd"/>
</dbReference>
<dbReference type="InterPro" id="IPR036188">
    <property type="entry name" value="FAD/NAD-bd_sf"/>
</dbReference>
<dbReference type="InterPro" id="IPR023753">
    <property type="entry name" value="FAD/NAD-binding_dom"/>
</dbReference>
<dbReference type="InterPro" id="IPR027545">
    <property type="entry name" value="Kynurenine_monooxygenase"/>
</dbReference>
<dbReference type="PANTHER" id="PTHR46028">
    <property type="entry name" value="KYNURENINE 3-MONOOXYGENASE"/>
    <property type="match status" value="1"/>
</dbReference>
<dbReference type="PANTHER" id="PTHR46028:SF2">
    <property type="entry name" value="KYNURENINE 3-MONOOXYGENASE"/>
    <property type="match status" value="1"/>
</dbReference>
<dbReference type="Pfam" id="PF01494">
    <property type="entry name" value="FAD_binding_3"/>
    <property type="match status" value="1"/>
</dbReference>
<dbReference type="Pfam" id="PF07992">
    <property type="entry name" value="Pyr_redox_2"/>
    <property type="match status" value="1"/>
</dbReference>
<dbReference type="PRINTS" id="PR00420">
    <property type="entry name" value="RNGMNOXGNASE"/>
</dbReference>
<dbReference type="SUPFAM" id="SSF51905">
    <property type="entry name" value="FAD/NAD(P)-binding domain"/>
    <property type="match status" value="1"/>
</dbReference>
<keyword id="KW-0274">FAD</keyword>
<keyword id="KW-0285">Flavoprotein</keyword>
<keyword id="KW-0472">Membrane</keyword>
<keyword id="KW-0496">Mitochondrion</keyword>
<keyword id="KW-1000">Mitochondrion outer membrane</keyword>
<keyword id="KW-0503">Monooxygenase</keyword>
<keyword id="KW-0521">NADP</keyword>
<keyword id="KW-0560">Oxidoreductase</keyword>
<keyword id="KW-0662">Pyridine nucleotide biosynthesis</keyword>
<keyword id="KW-1185">Reference proteome</keyword>